<feature type="chain" id="PRO_0000211425" description="Uncharacterized protein C13G6.15c">
    <location>
        <begin position="1"/>
        <end position="163"/>
    </location>
</feature>
<feature type="region of interest" description="Disordered" evidence="2">
    <location>
        <begin position="142"/>
        <end position="163"/>
    </location>
</feature>
<feature type="compositionally biased region" description="Polar residues" evidence="2">
    <location>
        <begin position="153"/>
        <end position="163"/>
    </location>
</feature>
<comment type="function">
    <text evidence="1">Inhibits calcineurin-dependent transcriptional responses by binding to the catalytic domain of calcineurin.</text>
</comment>
<comment type="similarity">
    <text evidence="3">Belongs to the RCAN family.</text>
</comment>
<evidence type="ECO:0000250" key="1"/>
<evidence type="ECO:0000256" key="2">
    <source>
        <dbReference type="SAM" id="MobiDB-lite"/>
    </source>
</evidence>
<evidence type="ECO:0000305" key="3"/>
<dbReference type="EMBL" id="CU329670">
    <property type="protein sequence ID" value="CAA91108.1"/>
    <property type="molecule type" value="Genomic_DNA"/>
</dbReference>
<dbReference type="PIR" id="S62444">
    <property type="entry name" value="S62444"/>
</dbReference>
<dbReference type="RefSeq" id="NP_592841.1">
    <property type="nucleotide sequence ID" value="NM_001018242.2"/>
</dbReference>
<dbReference type="BioGRID" id="279322">
    <property type="interactions" value="6"/>
</dbReference>
<dbReference type="FunCoup" id="Q09791">
    <property type="interactions" value="199"/>
</dbReference>
<dbReference type="STRING" id="284812.Q09791"/>
<dbReference type="iPTMnet" id="Q09791"/>
<dbReference type="PaxDb" id="4896-SPAC13G6.15c.1"/>
<dbReference type="EnsemblFungi" id="SPAC13G6.15c.1">
    <property type="protein sequence ID" value="SPAC13G6.15c.1:pep"/>
    <property type="gene ID" value="SPAC13G6.15c"/>
</dbReference>
<dbReference type="GeneID" id="2542877"/>
<dbReference type="KEGG" id="spo:2542877"/>
<dbReference type="PomBase" id="SPAC13G6.15c"/>
<dbReference type="VEuPathDB" id="FungiDB:SPAC13G6.15c"/>
<dbReference type="eggNOG" id="KOG4019">
    <property type="taxonomic scope" value="Eukaryota"/>
</dbReference>
<dbReference type="HOGENOM" id="CLU_1661814_0_0_1"/>
<dbReference type="InParanoid" id="Q09791"/>
<dbReference type="OMA" id="PIDCHYV"/>
<dbReference type="PRO" id="PR:Q09791"/>
<dbReference type="Proteomes" id="UP000002485">
    <property type="component" value="Chromosome I"/>
</dbReference>
<dbReference type="GO" id="GO:0005737">
    <property type="term" value="C:cytoplasm"/>
    <property type="evidence" value="ECO:0000318"/>
    <property type="project" value="GO_Central"/>
</dbReference>
<dbReference type="GO" id="GO:0005829">
    <property type="term" value="C:cytosol"/>
    <property type="evidence" value="ECO:0007005"/>
    <property type="project" value="PomBase"/>
</dbReference>
<dbReference type="GO" id="GO:0005634">
    <property type="term" value="C:nucleus"/>
    <property type="evidence" value="ECO:0007005"/>
    <property type="project" value="PomBase"/>
</dbReference>
<dbReference type="GO" id="GO:0008597">
    <property type="term" value="F:calcium-dependent protein serine/threonine phosphatase regulator activity"/>
    <property type="evidence" value="ECO:0000318"/>
    <property type="project" value="GO_Central"/>
</dbReference>
<dbReference type="GO" id="GO:0019722">
    <property type="term" value="P:calcium-mediated signaling"/>
    <property type="evidence" value="ECO:0000318"/>
    <property type="project" value="GO_Central"/>
</dbReference>
<dbReference type="InterPro" id="IPR006931">
    <property type="entry name" value="Calcipressin"/>
</dbReference>
<dbReference type="PANTHER" id="PTHR10300">
    <property type="entry name" value="CALCIPRESSIN"/>
    <property type="match status" value="1"/>
</dbReference>
<dbReference type="PANTHER" id="PTHR10300:SF14">
    <property type="entry name" value="PROTEIN SARAH"/>
    <property type="match status" value="1"/>
</dbReference>
<dbReference type="Pfam" id="PF04847">
    <property type="entry name" value="Calcipressin"/>
    <property type="match status" value="1"/>
</dbReference>
<name>YA9F_SCHPO</name>
<keyword id="KW-1185">Reference proteome</keyword>
<accession>Q09791</accession>
<gene>
    <name type="ORF">SPAC13G6.15c</name>
    <name type="ORF">SPAC24B11.04c</name>
</gene>
<protein>
    <recommendedName>
        <fullName>Uncharacterized protein C13G6.15c</fullName>
    </recommendedName>
</protein>
<organism>
    <name type="scientific">Schizosaccharomyces pombe (strain 972 / ATCC 24843)</name>
    <name type="common">Fission yeast</name>
    <dbReference type="NCBI Taxonomy" id="284812"/>
    <lineage>
        <taxon>Eukaryota</taxon>
        <taxon>Fungi</taxon>
        <taxon>Dikarya</taxon>
        <taxon>Ascomycota</taxon>
        <taxon>Taphrinomycotina</taxon>
        <taxon>Schizosaccharomycetes</taxon>
        <taxon>Schizosaccharomycetales</taxon>
        <taxon>Schizosaccharomycetaceae</taxon>
        <taxon>Schizosaccharomyces</taxon>
    </lineage>
</organism>
<reference key="1">
    <citation type="journal article" date="2002" name="Nature">
        <title>The genome sequence of Schizosaccharomyces pombe.</title>
        <authorList>
            <person name="Wood V."/>
            <person name="Gwilliam R."/>
            <person name="Rajandream M.A."/>
            <person name="Lyne M.H."/>
            <person name="Lyne R."/>
            <person name="Stewart A."/>
            <person name="Sgouros J.G."/>
            <person name="Peat N."/>
            <person name="Hayles J."/>
            <person name="Baker S.G."/>
            <person name="Basham D."/>
            <person name="Bowman S."/>
            <person name="Brooks K."/>
            <person name="Brown D."/>
            <person name="Brown S."/>
            <person name="Chillingworth T."/>
            <person name="Churcher C.M."/>
            <person name="Collins M."/>
            <person name="Connor R."/>
            <person name="Cronin A."/>
            <person name="Davis P."/>
            <person name="Feltwell T."/>
            <person name="Fraser A."/>
            <person name="Gentles S."/>
            <person name="Goble A."/>
            <person name="Hamlin N."/>
            <person name="Harris D.E."/>
            <person name="Hidalgo J."/>
            <person name="Hodgson G."/>
            <person name="Holroyd S."/>
            <person name="Hornsby T."/>
            <person name="Howarth S."/>
            <person name="Huckle E.J."/>
            <person name="Hunt S."/>
            <person name="Jagels K."/>
            <person name="James K.D."/>
            <person name="Jones L."/>
            <person name="Jones M."/>
            <person name="Leather S."/>
            <person name="McDonald S."/>
            <person name="McLean J."/>
            <person name="Mooney P."/>
            <person name="Moule S."/>
            <person name="Mungall K.L."/>
            <person name="Murphy L.D."/>
            <person name="Niblett D."/>
            <person name="Odell C."/>
            <person name="Oliver K."/>
            <person name="O'Neil S."/>
            <person name="Pearson D."/>
            <person name="Quail M.A."/>
            <person name="Rabbinowitsch E."/>
            <person name="Rutherford K.M."/>
            <person name="Rutter S."/>
            <person name="Saunders D."/>
            <person name="Seeger K."/>
            <person name="Sharp S."/>
            <person name="Skelton J."/>
            <person name="Simmonds M.N."/>
            <person name="Squares R."/>
            <person name="Squares S."/>
            <person name="Stevens K."/>
            <person name="Taylor K."/>
            <person name="Taylor R.G."/>
            <person name="Tivey A."/>
            <person name="Walsh S.V."/>
            <person name="Warren T."/>
            <person name="Whitehead S."/>
            <person name="Woodward J.R."/>
            <person name="Volckaert G."/>
            <person name="Aert R."/>
            <person name="Robben J."/>
            <person name="Grymonprez B."/>
            <person name="Weltjens I."/>
            <person name="Vanstreels E."/>
            <person name="Rieger M."/>
            <person name="Schaefer M."/>
            <person name="Mueller-Auer S."/>
            <person name="Gabel C."/>
            <person name="Fuchs M."/>
            <person name="Duesterhoeft A."/>
            <person name="Fritzc C."/>
            <person name="Holzer E."/>
            <person name="Moestl D."/>
            <person name="Hilbert H."/>
            <person name="Borzym K."/>
            <person name="Langer I."/>
            <person name="Beck A."/>
            <person name="Lehrach H."/>
            <person name="Reinhardt R."/>
            <person name="Pohl T.M."/>
            <person name="Eger P."/>
            <person name="Zimmermann W."/>
            <person name="Wedler H."/>
            <person name="Wambutt R."/>
            <person name="Purnelle B."/>
            <person name="Goffeau A."/>
            <person name="Cadieu E."/>
            <person name="Dreano S."/>
            <person name="Gloux S."/>
            <person name="Lelaure V."/>
            <person name="Mottier S."/>
            <person name="Galibert F."/>
            <person name="Aves S.J."/>
            <person name="Xiang Z."/>
            <person name="Hunt C."/>
            <person name="Moore K."/>
            <person name="Hurst S.M."/>
            <person name="Lucas M."/>
            <person name="Rochet M."/>
            <person name="Gaillardin C."/>
            <person name="Tallada V.A."/>
            <person name="Garzon A."/>
            <person name="Thode G."/>
            <person name="Daga R.R."/>
            <person name="Cruzado L."/>
            <person name="Jimenez J."/>
            <person name="Sanchez M."/>
            <person name="del Rey F."/>
            <person name="Benito J."/>
            <person name="Dominguez A."/>
            <person name="Revuelta J.L."/>
            <person name="Moreno S."/>
            <person name="Armstrong J."/>
            <person name="Forsburg S.L."/>
            <person name="Cerutti L."/>
            <person name="Lowe T."/>
            <person name="McCombie W.R."/>
            <person name="Paulsen I."/>
            <person name="Potashkin J."/>
            <person name="Shpakovski G.V."/>
            <person name="Ussery D."/>
            <person name="Barrell B.G."/>
            <person name="Nurse P."/>
        </authorList>
    </citation>
    <scope>NUCLEOTIDE SEQUENCE [LARGE SCALE GENOMIC DNA]</scope>
    <source>
        <strain>972 / ATCC 24843</strain>
    </source>
</reference>
<sequence length="163" mass="18051">MLVFTTSPDHVDELNEFVQQLNPVAFTRVLRGLGKVLASYNDKAVEEDTLKKSSTGSLPSGQQVHCQYVLDDPNHVEGISVDQSLQVPKFEKNWLISPPGSPPVGWEPIVEESPNSQHLAHDIQLKLDELGNALLNDHSAGPQIVISEHNNTKETSPSRQFEH</sequence>
<proteinExistence type="inferred from homology"/>